<keyword id="KW-0167">Capsid protein</keyword>
<keyword id="KW-1153">Inner capsid protein</keyword>
<keyword id="KW-0677">Repeat</keyword>
<keyword id="KW-0694">RNA-binding</keyword>
<keyword id="KW-1141">T=2 icosahedral capsid protein</keyword>
<keyword id="KW-0832">Ubl conjugation</keyword>
<keyword id="KW-0946">Virion</keyword>
<name>VP2_ROTWI</name>
<feature type="chain" id="PRO_0000368051" description="Inner capsid protein VP2">
    <location>
        <begin position="1"/>
        <end position="890"/>
    </location>
</feature>
<feature type="region of interest" description="5-fold hub; involved in the encapsidation of VP1 and VP3" evidence="1">
    <location>
        <begin position="1"/>
        <end position="88"/>
    </location>
</feature>
<feature type="region of interest" description="Disordered" evidence="2">
    <location>
        <begin position="1"/>
        <end position="45"/>
    </location>
</feature>
<feature type="region of interest" description="Hydrophobic" evidence="1">
    <location>
        <begin position="404"/>
        <end position="424"/>
    </location>
</feature>
<feature type="region of interest" description="Hydrophobic" evidence="1">
    <location>
        <begin position="432"/>
        <end position="452"/>
    </location>
</feature>
<feature type="compositionally biased region" description="Polar residues" evidence="2">
    <location>
        <begin position="28"/>
        <end position="42"/>
    </location>
</feature>
<feature type="site" description="Interaction with the intermediate capsid protein VP6" evidence="1">
    <location>
        <position position="232"/>
    </location>
</feature>
<feature type="site" description="Interaction with the intermediate capsid protein VP6" evidence="1">
    <location>
        <position position="236"/>
    </location>
</feature>
<feature type="site" description="Interaction with the intermediate capsid protein VP6" evidence="1">
    <location>
        <position position="849"/>
    </location>
</feature>
<feature type="site" description="Interaction with the intermediate capsid protein VP6" evidence="1">
    <location>
        <position position="851"/>
    </location>
</feature>
<reference key="1">
    <citation type="journal article" date="2008" name="J. Virol.">
        <title>Full genome-based classification of rotaviruses reveals a common origin between human Wa-Like and porcine rotavirus strains and human DS-1-like and bovine rotavirus strains.</title>
        <authorList>
            <person name="Matthijnssens J."/>
            <person name="Ciarlet M."/>
            <person name="Heiman E.M."/>
            <person name="Arijs I."/>
            <person name="Delbeke T."/>
            <person name="McDonald S.M."/>
            <person name="Palombo E.A."/>
            <person name="Iturriza-Gomara M."/>
            <person name="Maes P."/>
            <person name="Patton J.T."/>
            <person name="Rahman M."/>
            <person name="Van Ranst M."/>
        </authorList>
    </citation>
    <scope>NUCLEOTIDE SEQUENCE [GENOMIC RNA]</scope>
</reference>
<reference key="2">
    <citation type="journal article" date="2006" name="J. Clin. Microbiol.">
        <title>Molecular epidemiology of G9 rotaviruses in Taiwan between 2000 and 2002.</title>
        <authorList>
            <person name="Lin Y.P."/>
            <person name="Chang S.Y."/>
            <person name="Kao C.L."/>
            <person name="Huang L.M."/>
            <person name="Chung M.Y."/>
            <person name="Yang J.Y."/>
            <person name="Chen H.Y."/>
            <person name="Taniguchi K."/>
            <person name="Tsai K.S."/>
            <person name="Lee C.N."/>
        </authorList>
    </citation>
    <scope>NUCLEOTIDE SEQUENCE [GENOMIC RNA] OF 157-325</scope>
</reference>
<sequence length="890" mass="103947">MAYRKRGVKRENLLQQNERLQEKEIENNTDVTMENKNNNRKQQLSDKVLSQKEEIITDVQDDIKIVDEVKKSSKEESKQLLEILKTKEDHQKEVQYEILQKTIPTFEPKESILKKLEDIRPEQAKKQMKLFRIFEPRQLPIYRANGEKELRNRWYWKLKKDTLPDGDYDVREYFLNLYDQILIEMPDYLLLKDMAVENKNSRDAGKVVDSETASICDAIFQDEETEGVIRRFIADMRQQIQADRNIVNYPSILHPIDHAFNEYFLNHQLVEPLNNEIIFNYIPERIRNDVNYILNMDMNLPSTARYIRPNLLQDRLNLHDNFESLWDTITTSNYILARSVVPDLREKELVSTEAQIQKMSQDLQLEALTIQSETQFLAGINSQAANDCFKTLIAAMLSQRTMSLDFVTTNYMSLISGMWLLTVIPNDMFLRESLVACELAIINTIVYPAFGMQRMHYRNGDPQTPFQIAEQQIQNFQVANWLHFINNNRFRQVVIDGVLNQTLNDNIRNGQVINQLMEALMQLSRQQFPTMPVDYKRSIQRGILLLSNRLGQLVDLTRLLSYNYETLMACITMNMQHVQTLTTEKLQLTSVTSLCMLIGNTTVIPSPQTLFHYYNVNVNFHSNYNERINDAVAIITAANRLNLYQKKMKSIVEDFLKRLQIFDVPRVPDDQMYRLRDRLRLLPVERRRLDIFNLILMNMDQIERASDKIAQGVIIAYRDMQLERDEMYGFVNIARNLDGYQQINLEELMRTGDYGQITNMLLNNQPVALVGALPFVTDSSVISLIAKLDATVFAQIVKLRKVDTLKPILYKINSDSNDFYLVANYDWIPTSTTKVYKQIPQPFDFRASMHMLTSNLTFTVYSDLLSFVSADTVEPINAIAFDNMRIMNEL</sequence>
<proteinExistence type="inferred from homology"/>
<accession>B1NKU2</accession>
<accession>Q0Q7M0</accession>
<evidence type="ECO:0000255" key="1">
    <source>
        <dbReference type="HAMAP-Rule" id="MF_04127"/>
    </source>
</evidence>
<evidence type="ECO:0000256" key="2">
    <source>
        <dbReference type="SAM" id="MobiDB-lite"/>
    </source>
</evidence>
<dbReference type="EMBL" id="EF583050">
    <property type="protein sequence ID" value="ABU87859.1"/>
    <property type="molecule type" value="Genomic_RNA"/>
</dbReference>
<dbReference type="EMBL" id="DQ490201">
    <property type="protein sequence ID" value="ABF57053.1"/>
    <property type="molecule type" value="Genomic_RNA"/>
</dbReference>
<dbReference type="SMR" id="B1NKU2"/>
<dbReference type="Proteomes" id="UP000006580">
    <property type="component" value="Genome"/>
</dbReference>
<dbReference type="GO" id="GO:0039616">
    <property type="term" value="C:T=2 icosahedral viral capsid"/>
    <property type="evidence" value="ECO:0007669"/>
    <property type="project" value="UniProtKB-UniRule"/>
</dbReference>
<dbReference type="GO" id="GO:0039625">
    <property type="term" value="C:viral inner capsid"/>
    <property type="evidence" value="ECO:0007669"/>
    <property type="project" value="UniProtKB-UniRule"/>
</dbReference>
<dbReference type="GO" id="GO:0019013">
    <property type="term" value="C:viral nucleocapsid"/>
    <property type="evidence" value="ECO:0007669"/>
    <property type="project" value="UniProtKB-UniRule"/>
</dbReference>
<dbReference type="GO" id="GO:0003723">
    <property type="term" value="F:RNA binding"/>
    <property type="evidence" value="ECO:0007669"/>
    <property type="project" value="UniProtKB-UniRule"/>
</dbReference>
<dbReference type="HAMAP" id="MF_04123">
    <property type="entry name" value="Rota_VP2"/>
    <property type="match status" value="1"/>
</dbReference>
<dbReference type="HAMAP" id="MF_04127">
    <property type="entry name" value="Rota_VP2_A"/>
    <property type="match status" value="1"/>
</dbReference>
<dbReference type="InterPro" id="IPR007779">
    <property type="entry name" value="Rotavirus_VP2"/>
</dbReference>
<dbReference type="Pfam" id="PF05087">
    <property type="entry name" value="Rota_VP2"/>
    <property type="match status" value="1"/>
</dbReference>
<protein>
    <recommendedName>
        <fullName evidence="1">Inner capsid protein VP2</fullName>
    </recommendedName>
</protein>
<organism>
    <name type="scientific">Rotavirus A (isolate RVA/Human/United States/WI61/1983/G9P1A[8])</name>
    <name type="common">RV-A</name>
    <dbReference type="NCBI Taxonomy" id="578830"/>
    <lineage>
        <taxon>Viruses</taxon>
        <taxon>Riboviria</taxon>
        <taxon>Orthornavirae</taxon>
        <taxon>Duplornaviricota</taxon>
        <taxon>Resentoviricetes</taxon>
        <taxon>Reovirales</taxon>
        <taxon>Sedoreoviridae</taxon>
        <taxon>Rotavirus</taxon>
        <taxon>Rotavirus A</taxon>
    </lineage>
</organism>
<organismHost>
    <name type="scientific">Homo sapiens</name>
    <name type="common">Human</name>
    <dbReference type="NCBI Taxonomy" id="9606"/>
</organismHost>
<comment type="function">
    <text evidence="1">Inner capsid protein that self-assembles to form an icosahedral capsid with a T=2 symmetry, which consists of 120 copies of VP2, with channels at each of its five-fold vertices. This capsid constitutes the innermost concentric layer of the viral mature particle. It encapsidates the polymerase VP1, the capping enzyme VP3 and the genomic dsRNA, thereby defining the core. The innermost VP2 capsid and the intermediate VP6 capsid remain intact following cell entry to protect the dsRNA from degradation and to prevent unfavorable antiviral responses in the host cell during all the replication cycle of the virus. Nascent transcripts are transcribed within the structural confines of this double-layered particle (DLP) and are extruded through the channels formed by VP2 N-termini. VP2 is required for the replicase activity of VP1 polymerase. Probably recruits a copy of a VP1-VP3 complex, potentially along with a segment of plus-strand RNA, as a decamer of VP2 assembles. May activate the autoinhibited VP1/RNA complex to coordinate packaging and genome replication.</text>
</comment>
<comment type="subunit">
    <text evidence="1">Homodecamer; each decamer is made up of two conformers of VP2, called VP2A and VP2B. Interacts with a VP1-VP3 complex. Interacts with the intermediate capsid protein VP6. Interacts with NSP5. Interacts (via N-terminus) with NSP2.</text>
</comment>
<comment type="subcellular location">
    <subcellularLocation>
        <location evidence="1">Virion</location>
    </subcellularLocation>
    <text evidence="1">Inner capsid protein. Also found in spherical cytoplasmic structures, called virus factories, that appear early after infection and are the site of viral replication and packaging.</text>
</comment>
<comment type="domain">
    <text evidence="1">The N-terminus binds RNA. It is necessary for encapsidation of VP1 and VP3. The N-termini of 10 VP2 molecules form a cylindrical hub underneath each 5-fold axis of the inner capsid.</text>
</comment>
<comment type="PTM">
    <text evidence="1">Sumoylated with SUMO1 and SUMO2. Sumoylation of viral proteins seems to have a positive role on viral replication.</text>
</comment>
<comment type="similarity">
    <text evidence="1">Belongs to the rotavirus VP2 family.</text>
</comment>